<name>KDSA_PSYIN</name>
<feature type="chain" id="PRO_1000003343" description="2-dehydro-3-deoxyphosphooctonate aldolase">
    <location>
        <begin position="1"/>
        <end position="281"/>
    </location>
</feature>
<comment type="catalytic activity">
    <reaction evidence="1">
        <text>D-arabinose 5-phosphate + phosphoenolpyruvate + H2O = 3-deoxy-alpha-D-manno-2-octulosonate-8-phosphate + phosphate</text>
        <dbReference type="Rhea" id="RHEA:14053"/>
        <dbReference type="ChEBI" id="CHEBI:15377"/>
        <dbReference type="ChEBI" id="CHEBI:43474"/>
        <dbReference type="ChEBI" id="CHEBI:57693"/>
        <dbReference type="ChEBI" id="CHEBI:58702"/>
        <dbReference type="ChEBI" id="CHEBI:85985"/>
        <dbReference type="EC" id="2.5.1.55"/>
    </reaction>
</comment>
<comment type="pathway">
    <text evidence="1">Carbohydrate biosynthesis; 3-deoxy-D-manno-octulosonate biosynthesis; 3-deoxy-D-manno-octulosonate from D-ribulose 5-phosphate: step 2/3.</text>
</comment>
<comment type="pathway">
    <text evidence="1">Bacterial outer membrane biogenesis; lipopolysaccharide biosynthesis.</text>
</comment>
<comment type="subcellular location">
    <subcellularLocation>
        <location evidence="1">Cytoplasm</location>
    </subcellularLocation>
</comment>
<comment type="similarity">
    <text evidence="1">Belongs to the KdsA family.</text>
</comment>
<dbReference type="EC" id="2.5.1.55" evidence="1"/>
<dbReference type="EMBL" id="CP000510">
    <property type="protein sequence ID" value="ABM03408.1"/>
    <property type="molecule type" value="Genomic_DNA"/>
</dbReference>
<dbReference type="RefSeq" id="WP_011769968.1">
    <property type="nucleotide sequence ID" value="NC_008709.1"/>
</dbReference>
<dbReference type="SMR" id="A1SV93"/>
<dbReference type="STRING" id="357804.Ping_1611"/>
<dbReference type="KEGG" id="pin:Ping_1611"/>
<dbReference type="eggNOG" id="COG2877">
    <property type="taxonomic scope" value="Bacteria"/>
</dbReference>
<dbReference type="HOGENOM" id="CLU_036666_0_0_6"/>
<dbReference type="OrthoDB" id="9776934at2"/>
<dbReference type="UniPathway" id="UPA00030"/>
<dbReference type="UniPathway" id="UPA00357">
    <property type="reaction ID" value="UER00474"/>
</dbReference>
<dbReference type="Proteomes" id="UP000000639">
    <property type="component" value="Chromosome"/>
</dbReference>
<dbReference type="GO" id="GO:0005737">
    <property type="term" value="C:cytoplasm"/>
    <property type="evidence" value="ECO:0007669"/>
    <property type="project" value="UniProtKB-SubCell"/>
</dbReference>
<dbReference type="GO" id="GO:0008676">
    <property type="term" value="F:3-deoxy-8-phosphooctulonate synthase activity"/>
    <property type="evidence" value="ECO:0007669"/>
    <property type="project" value="UniProtKB-UniRule"/>
</dbReference>
<dbReference type="GO" id="GO:0019294">
    <property type="term" value="P:keto-3-deoxy-D-manno-octulosonic acid biosynthetic process"/>
    <property type="evidence" value="ECO:0007669"/>
    <property type="project" value="UniProtKB-UniRule"/>
</dbReference>
<dbReference type="Gene3D" id="3.20.20.70">
    <property type="entry name" value="Aldolase class I"/>
    <property type="match status" value="1"/>
</dbReference>
<dbReference type="HAMAP" id="MF_00056">
    <property type="entry name" value="KDO8P_synth"/>
    <property type="match status" value="1"/>
</dbReference>
<dbReference type="InterPro" id="IPR013785">
    <property type="entry name" value="Aldolase_TIM"/>
</dbReference>
<dbReference type="InterPro" id="IPR006218">
    <property type="entry name" value="DAHP1/KDSA"/>
</dbReference>
<dbReference type="InterPro" id="IPR006269">
    <property type="entry name" value="KDO8P_synthase"/>
</dbReference>
<dbReference type="NCBIfam" id="TIGR01362">
    <property type="entry name" value="KDO8P_synth"/>
    <property type="match status" value="1"/>
</dbReference>
<dbReference type="NCBIfam" id="NF003543">
    <property type="entry name" value="PRK05198.1"/>
    <property type="match status" value="1"/>
</dbReference>
<dbReference type="PANTHER" id="PTHR21057">
    <property type="entry name" value="PHOSPHO-2-DEHYDRO-3-DEOXYHEPTONATE ALDOLASE"/>
    <property type="match status" value="1"/>
</dbReference>
<dbReference type="Pfam" id="PF00793">
    <property type="entry name" value="DAHP_synth_1"/>
    <property type="match status" value="1"/>
</dbReference>
<dbReference type="SUPFAM" id="SSF51569">
    <property type="entry name" value="Aldolase"/>
    <property type="match status" value="1"/>
</dbReference>
<sequence length="281" mass="30932">MKQKIIKVGNIDVANDRPFVLFGGMNVLESRDMAMRVVETYVEATTALNIPYVFKASFDKANRSSIHSYRGPGLEEGLRIFEEIKNTFNVPIITDVHEPSQAAPVAEVVDVIQLPAFLSRQTDLVKAMAETNAVINVKKAQFLAPHEMKHIITKFNEAGNDNIILCERGSCFGYNNLVVDMLGFSTMKETGYPVIFDVTHSLQKPGARSDSADGRRSQVVQLGLAGMSQGIAGLFLESHPDPANAKCDGPCALPLHQLKAFLSQMKQMDELAKSFDIIDTE</sequence>
<accession>A1SV93</accession>
<protein>
    <recommendedName>
        <fullName evidence="1">2-dehydro-3-deoxyphosphooctonate aldolase</fullName>
        <ecNumber evidence="1">2.5.1.55</ecNumber>
    </recommendedName>
    <alternativeName>
        <fullName evidence="1">3-deoxy-D-manno-octulosonic acid 8-phosphate synthase</fullName>
    </alternativeName>
    <alternativeName>
        <fullName evidence="1">KDO-8-phosphate synthase</fullName>
        <shortName evidence="1">KDO 8-P synthase</shortName>
        <shortName evidence="1">KDOPS</shortName>
    </alternativeName>
    <alternativeName>
        <fullName evidence="1">Phospho-2-dehydro-3-deoxyoctonate aldolase</fullName>
    </alternativeName>
</protein>
<reference key="1">
    <citation type="journal article" date="2008" name="BMC Genomics">
        <title>Genomics of an extreme psychrophile, Psychromonas ingrahamii.</title>
        <authorList>
            <person name="Riley M."/>
            <person name="Staley J.T."/>
            <person name="Danchin A."/>
            <person name="Wang T.Z."/>
            <person name="Brettin T.S."/>
            <person name="Hauser L.J."/>
            <person name="Land M.L."/>
            <person name="Thompson L.S."/>
        </authorList>
    </citation>
    <scope>NUCLEOTIDE SEQUENCE [LARGE SCALE GENOMIC DNA]</scope>
    <source>
        <strain>DSM 17664 / CCUG 51855 / 37</strain>
    </source>
</reference>
<proteinExistence type="inferred from homology"/>
<keyword id="KW-0963">Cytoplasm</keyword>
<keyword id="KW-0448">Lipopolysaccharide biosynthesis</keyword>
<keyword id="KW-1185">Reference proteome</keyword>
<keyword id="KW-0808">Transferase</keyword>
<organism>
    <name type="scientific">Psychromonas ingrahamii (strain DSM 17664 / CCUG 51855 / 37)</name>
    <dbReference type="NCBI Taxonomy" id="357804"/>
    <lineage>
        <taxon>Bacteria</taxon>
        <taxon>Pseudomonadati</taxon>
        <taxon>Pseudomonadota</taxon>
        <taxon>Gammaproteobacteria</taxon>
        <taxon>Alteromonadales</taxon>
        <taxon>Psychromonadaceae</taxon>
        <taxon>Psychromonas</taxon>
    </lineage>
</organism>
<evidence type="ECO:0000255" key="1">
    <source>
        <dbReference type="HAMAP-Rule" id="MF_00056"/>
    </source>
</evidence>
<gene>
    <name evidence="1" type="primary">kdsA</name>
    <name type="ordered locus">Ping_1611</name>
</gene>